<sequence length="72" mass="8303">MSKEDSFEMEGTVVDTLPNTMFRVELENGHVVTAHISGKMRKNYIRILTGDKVRVELTPYDLSKGRITYRAR</sequence>
<comment type="function">
    <text evidence="1">One of the essential components for the initiation of protein synthesis. Stabilizes the binding of IF-2 and IF-3 on the 30S subunit to which N-formylmethionyl-tRNA(fMet) subsequently binds. Helps modulate mRNA selection, yielding the 30S pre-initiation complex (PIC). Upon addition of the 50S ribosomal subunit IF-1, IF-2 and IF-3 are released leaving the mature 70S translation initiation complex.</text>
</comment>
<comment type="subunit">
    <text evidence="1">Component of the 30S ribosomal translation pre-initiation complex which assembles on the 30S ribosome in the order IF-2 and IF-3, IF-1 and N-formylmethionyl-tRNA(fMet); mRNA recruitment can occur at any time during PIC assembly.</text>
</comment>
<comment type="subcellular location">
    <subcellularLocation>
        <location evidence="1">Cytoplasm</location>
    </subcellularLocation>
</comment>
<comment type="similarity">
    <text evidence="1">Belongs to the IF-1 family.</text>
</comment>
<accession>Q4ZRK8</accession>
<gene>
    <name evidence="1" type="primary">infA</name>
    <name type="ordered locus">Psyr_3182</name>
</gene>
<keyword id="KW-0963">Cytoplasm</keyword>
<keyword id="KW-0396">Initiation factor</keyword>
<keyword id="KW-0648">Protein biosynthesis</keyword>
<keyword id="KW-0694">RNA-binding</keyword>
<keyword id="KW-0699">rRNA-binding</keyword>
<proteinExistence type="inferred from homology"/>
<organism>
    <name type="scientific">Pseudomonas syringae pv. syringae (strain B728a)</name>
    <dbReference type="NCBI Taxonomy" id="205918"/>
    <lineage>
        <taxon>Bacteria</taxon>
        <taxon>Pseudomonadati</taxon>
        <taxon>Pseudomonadota</taxon>
        <taxon>Gammaproteobacteria</taxon>
        <taxon>Pseudomonadales</taxon>
        <taxon>Pseudomonadaceae</taxon>
        <taxon>Pseudomonas</taxon>
        <taxon>Pseudomonas syringae</taxon>
    </lineage>
</organism>
<dbReference type="EMBL" id="CP000075">
    <property type="protein sequence ID" value="AAY38214.1"/>
    <property type="molecule type" value="Genomic_DNA"/>
</dbReference>
<dbReference type="RefSeq" id="WP_002553999.1">
    <property type="nucleotide sequence ID" value="NC_007005.1"/>
</dbReference>
<dbReference type="RefSeq" id="YP_236252.1">
    <property type="nucleotide sequence ID" value="NC_007005.1"/>
</dbReference>
<dbReference type="SMR" id="Q4ZRK8"/>
<dbReference type="STRING" id="205918.Psyr_3182"/>
<dbReference type="GeneID" id="98638452"/>
<dbReference type="KEGG" id="psb:Psyr_3182"/>
<dbReference type="PATRIC" id="fig|205918.7.peg.3248"/>
<dbReference type="eggNOG" id="COG0361">
    <property type="taxonomic scope" value="Bacteria"/>
</dbReference>
<dbReference type="HOGENOM" id="CLU_151267_1_0_6"/>
<dbReference type="OrthoDB" id="9803250at2"/>
<dbReference type="PRO" id="PR:Q4ZRK8"/>
<dbReference type="Proteomes" id="UP000000426">
    <property type="component" value="Chromosome"/>
</dbReference>
<dbReference type="GO" id="GO:0005829">
    <property type="term" value="C:cytosol"/>
    <property type="evidence" value="ECO:0007669"/>
    <property type="project" value="TreeGrafter"/>
</dbReference>
<dbReference type="GO" id="GO:0043022">
    <property type="term" value="F:ribosome binding"/>
    <property type="evidence" value="ECO:0007669"/>
    <property type="project" value="UniProtKB-UniRule"/>
</dbReference>
<dbReference type="GO" id="GO:0019843">
    <property type="term" value="F:rRNA binding"/>
    <property type="evidence" value="ECO:0007669"/>
    <property type="project" value="UniProtKB-UniRule"/>
</dbReference>
<dbReference type="GO" id="GO:0003743">
    <property type="term" value="F:translation initiation factor activity"/>
    <property type="evidence" value="ECO:0007669"/>
    <property type="project" value="UniProtKB-UniRule"/>
</dbReference>
<dbReference type="CDD" id="cd04451">
    <property type="entry name" value="S1_IF1"/>
    <property type="match status" value="1"/>
</dbReference>
<dbReference type="FunFam" id="2.40.50.140:FF:000002">
    <property type="entry name" value="Translation initiation factor IF-1"/>
    <property type="match status" value="1"/>
</dbReference>
<dbReference type="Gene3D" id="2.40.50.140">
    <property type="entry name" value="Nucleic acid-binding proteins"/>
    <property type="match status" value="1"/>
</dbReference>
<dbReference type="HAMAP" id="MF_00075">
    <property type="entry name" value="IF_1"/>
    <property type="match status" value="1"/>
</dbReference>
<dbReference type="InterPro" id="IPR012340">
    <property type="entry name" value="NA-bd_OB-fold"/>
</dbReference>
<dbReference type="InterPro" id="IPR006196">
    <property type="entry name" value="RNA-binding_domain_S1_IF1"/>
</dbReference>
<dbReference type="InterPro" id="IPR003029">
    <property type="entry name" value="S1_domain"/>
</dbReference>
<dbReference type="InterPro" id="IPR004368">
    <property type="entry name" value="TIF_IF1"/>
</dbReference>
<dbReference type="NCBIfam" id="TIGR00008">
    <property type="entry name" value="infA"/>
    <property type="match status" value="1"/>
</dbReference>
<dbReference type="PANTHER" id="PTHR33370">
    <property type="entry name" value="TRANSLATION INITIATION FACTOR IF-1, CHLOROPLASTIC"/>
    <property type="match status" value="1"/>
</dbReference>
<dbReference type="PANTHER" id="PTHR33370:SF1">
    <property type="entry name" value="TRANSLATION INITIATION FACTOR IF-1, CHLOROPLASTIC"/>
    <property type="match status" value="1"/>
</dbReference>
<dbReference type="Pfam" id="PF01176">
    <property type="entry name" value="eIF-1a"/>
    <property type="match status" value="1"/>
</dbReference>
<dbReference type="SMART" id="SM00316">
    <property type="entry name" value="S1"/>
    <property type="match status" value="1"/>
</dbReference>
<dbReference type="SUPFAM" id="SSF50249">
    <property type="entry name" value="Nucleic acid-binding proteins"/>
    <property type="match status" value="1"/>
</dbReference>
<dbReference type="PROSITE" id="PS50832">
    <property type="entry name" value="S1_IF1_TYPE"/>
    <property type="match status" value="1"/>
</dbReference>
<protein>
    <recommendedName>
        <fullName evidence="1">Translation initiation factor IF-1</fullName>
    </recommendedName>
</protein>
<reference key="1">
    <citation type="journal article" date="2005" name="Proc. Natl. Acad. Sci. U.S.A.">
        <title>Comparison of the complete genome sequences of Pseudomonas syringae pv. syringae B728a and pv. tomato DC3000.</title>
        <authorList>
            <person name="Feil H."/>
            <person name="Feil W.S."/>
            <person name="Chain P."/>
            <person name="Larimer F."/>
            <person name="Dibartolo G."/>
            <person name="Copeland A."/>
            <person name="Lykidis A."/>
            <person name="Trong S."/>
            <person name="Nolan M."/>
            <person name="Goltsman E."/>
            <person name="Thiel J."/>
            <person name="Malfatti S."/>
            <person name="Loper J.E."/>
            <person name="Lapidus A."/>
            <person name="Detter J.C."/>
            <person name="Land M."/>
            <person name="Richardson P.M."/>
            <person name="Kyrpides N.C."/>
            <person name="Ivanova N."/>
            <person name="Lindow S.E."/>
        </authorList>
    </citation>
    <scope>NUCLEOTIDE SEQUENCE [LARGE SCALE GENOMIC DNA]</scope>
    <source>
        <strain>B728a</strain>
    </source>
</reference>
<evidence type="ECO:0000255" key="1">
    <source>
        <dbReference type="HAMAP-Rule" id="MF_00075"/>
    </source>
</evidence>
<name>IF1_PSEU2</name>
<feature type="chain" id="PRO_0000263843" description="Translation initiation factor IF-1">
    <location>
        <begin position="1"/>
        <end position="72"/>
    </location>
</feature>
<feature type="domain" description="S1-like" evidence="1">
    <location>
        <begin position="1"/>
        <end position="72"/>
    </location>
</feature>